<protein>
    <recommendedName>
        <fullName evidence="1">Ribosomal RNA small subunit methyltransferase G</fullName>
        <ecNumber evidence="1">2.1.1.-</ecNumber>
    </recommendedName>
    <alternativeName>
        <fullName evidence="1">16S rRNA 7-methylguanosine methyltransferase</fullName>
        <shortName evidence="1">16S rRNA m7G methyltransferase</shortName>
    </alternativeName>
</protein>
<dbReference type="EC" id="2.1.1.-" evidence="1"/>
<dbReference type="EMBL" id="CP000736">
    <property type="protein sequence ID" value="ABR53611.1"/>
    <property type="molecule type" value="Genomic_DNA"/>
</dbReference>
<dbReference type="SMR" id="A6U593"/>
<dbReference type="KEGG" id="sah:SaurJH1_2789"/>
<dbReference type="HOGENOM" id="CLU_065341_0_0_9"/>
<dbReference type="GO" id="GO:0005829">
    <property type="term" value="C:cytosol"/>
    <property type="evidence" value="ECO:0007669"/>
    <property type="project" value="TreeGrafter"/>
</dbReference>
<dbReference type="GO" id="GO:0070043">
    <property type="term" value="F:rRNA (guanine-N7-)-methyltransferase activity"/>
    <property type="evidence" value="ECO:0007669"/>
    <property type="project" value="UniProtKB-UniRule"/>
</dbReference>
<dbReference type="CDD" id="cd02440">
    <property type="entry name" value="AdoMet_MTases"/>
    <property type="match status" value="1"/>
</dbReference>
<dbReference type="FunFam" id="3.40.50.150:FF:000041">
    <property type="entry name" value="Ribosomal RNA small subunit methyltransferase G"/>
    <property type="match status" value="1"/>
</dbReference>
<dbReference type="Gene3D" id="3.40.50.150">
    <property type="entry name" value="Vaccinia Virus protein VP39"/>
    <property type="match status" value="1"/>
</dbReference>
<dbReference type="HAMAP" id="MF_00074">
    <property type="entry name" value="16SrRNA_methyltr_G"/>
    <property type="match status" value="1"/>
</dbReference>
<dbReference type="InterPro" id="IPR003682">
    <property type="entry name" value="rRNA_ssu_MeTfrase_G"/>
</dbReference>
<dbReference type="InterPro" id="IPR029063">
    <property type="entry name" value="SAM-dependent_MTases_sf"/>
</dbReference>
<dbReference type="NCBIfam" id="TIGR00138">
    <property type="entry name" value="rsmG_gidB"/>
    <property type="match status" value="1"/>
</dbReference>
<dbReference type="PANTHER" id="PTHR31760">
    <property type="entry name" value="S-ADENOSYL-L-METHIONINE-DEPENDENT METHYLTRANSFERASES SUPERFAMILY PROTEIN"/>
    <property type="match status" value="1"/>
</dbReference>
<dbReference type="PANTHER" id="PTHR31760:SF0">
    <property type="entry name" value="S-ADENOSYL-L-METHIONINE-DEPENDENT METHYLTRANSFERASES SUPERFAMILY PROTEIN"/>
    <property type="match status" value="1"/>
</dbReference>
<dbReference type="Pfam" id="PF02527">
    <property type="entry name" value="GidB"/>
    <property type="match status" value="1"/>
</dbReference>
<dbReference type="PIRSF" id="PIRSF003078">
    <property type="entry name" value="GidB"/>
    <property type="match status" value="1"/>
</dbReference>
<dbReference type="SUPFAM" id="SSF53335">
    <property type="entry name" value="S-adenosyl-L-methionine-dependent methyltransferases"/>
    <property type="match status" value="1"/>
</dbReference>
<proteinExistence type="inferred from homology"/>
<comment type="function">
    <text evidence="1">Specifically methylates the N7 position of guanine in position 535 of 16S rRNA.</text>
</comment>
<comment type="subcellular location">
    <subcellularLocation>
        <location evidence="1">Cytoplasm</location>
    </subcellularLocation>
</comment>
<comment type="similarity">
    <text evidence="1">Belongs to the methyltransferase superfamily. RNA methyltransferase RsmG family.</text>
</comment>
<evidence type="ECO:0000255" key="1">
    <source>
        <dbReference type="HAMAP-Rule" id="MF_00074"/>
    </source>
</evidence>
<evidence type="ECO:0000256" key="2">
    <source>
        <dbReference type="SAM" id="MobiDB-lite"/>
    </source>
</evidence>
<feature type="chain" id="PRO_1000075235" description="Ribosomal RNA small subunit methyltransferase G">
    <location>
        <begin position="1"/>
        <end position="239"/>
    </location>
</feature>
<feature type="region of interest" description="Disordered" evidence="2">
    <location>
        <begin position="214"/>
        <end position="239"/>
    </location>
</feature>
<feature type="binding site" evidence="1">
    <location>
        <position position="77"/>
    </location>
    <ligand>
        <name>S-adenosyl-L-methionine</name>
        <dbReference type="ChEBI" id="CHEBI:59789"/>
    </ligand>
</feature>
<feature type="binding site" evidence="1">
    <location>
        <position position="82"/>
    </location>
    <ligand>
        <name>S-adenosyl-L-methionine</name>
        <dbReference type="ChEBI" id="CHEBI:59789"/>
    </ligand>
</feature>
<feature type="binding site" evidence="1">
    <location>
        <begin position="128"/>
        <end position="129"/>
    </location>
    <ligand>
        <name>S-adenosyl-L-methionine</name>
        <dbReference type="ChEBI" id="CHEBI:59789"/>
    </ligand>
</feature>
<feature type="binding site" evidence="1">
    <location>
        <position position="146"/>
    </location>
    <ligand>
        <name>S-adenosyl-L-methionine</name>
        <dbReference type="ChEBI" id="CHEBI:59789"/>
    </ligand>
</feature>
<reference key="1">
    <citation type="submission" date="2007-06" db="EMBL/GenBank/DDBJ databases">
        <title>Complete sequence of chromosome of Staphylococcus aureus subsp. aureus JH1.</title>
        <authorList>
            <consortium name="US DOE Joint Genome Institute"/>
            <person name="Copeland A."/>
            <person name="Lucas S."/>
            <person name="Lapidus A."/>
            <person name="Barry K."/>
            <person name="Detter J.C."/>
            <person name="Glavina del Rio T."/>
            <person name="Hammon N."/>
            <person name="Israni S."/>
            <person name="Dalin E."/>
            <person name="Tice H."/>
            <person name="Pitluck S."/>
            <person name="Chain P."/>
            <person name="Malfatti S."/>
            <person name="Shin M."/>
            <person name="Vergez L."/>
            <person name="Schmutz J."/>
            <person name="Larimer F."/>
            <person name="Land M."/>
            <person name="Hauser L."/>
            <person name="Kyrpides N."/>
            <person name="Ivanova N."/>
            <person name="Tomasz A."/>
            <person name="Richardson P."/>
        </authorList>
    </citation>
    <scope>NUCLEOTIDE SEQUENCE [LARGE SCALE GENOMIC DNA]</scope>
    <source>
        <strain>JH1</strain>
    </source>
</reference>
<sequence length="239" mass="27373">MTVEWLAEQLKEHNIELTETQKQQFQTYYRLLVEWNEKMNLTSITDEHDVYLKHFYDSIAPSFYFDFNQPISICDVGAGAGFPSIPLKIMFPQLKVTIVDSLNKRIQFLNHLASELQLQDVSFIHDRAETFGKGVYRESYDVVTARAVARLSVLSELCLPLIKKGGQFVALKSSKGEEELEEAKFAISVLGGNVTETHTFKLPEDAGERQMFIIDKKRQTPKKYPRKPGTPNKTPLLEK</sequence>
<name>RSMG_STAA2</name>
<accession>A6U593</accession>
<keyword id="KW-0963">Cytoplasm</keyword>
<keyword id="KW-0489">Methyltransferase</keyword>
<keyword id="KW-0698">rRNA processing</keyword>
<keyword id="KW-0949">S-adenosyl-L-methionine</keyword>
<keyword id="KW-0808">Transferase</keyword>
<organism>
    <name type="scientific">Staphylococcus aureus (strain JH1)</name>
    <dbReference type="NCBI Taxonomy" id="359787"/>
    <lineage>
        <taxon>Bacteria</taxon>
        <taxon>Bacillati</taxon>
        <taxon>Bacillota</taxon>
        <taxon>Bacilli</taxon>
        <taxon>Bacillales</taxon>
        <taxon>Staphylococcaceae</taxon>
        <taxon>Staphylococcus</taxon>
    </lineage>
</organism>
<gene>
    <name evidence="1" type="primary">rsmG</name>
    <name type="ordered locus">SaurJH1_2789</name>
</gene>